<organism>
    <name type="scientific">Choristoneura fumiferana defective polyhedrosis virus</name>
    <name type="common">Cfdef</name>
    <dbReference type="NCBI Taxonomy" id="74660"/>
    <lineage>
        <taxon>Viruses</taxon>
        <taxon>Viruses incertae sedis</taxon>
        <taxon>Naldaviricetes</taxon>
        <taxon>Lefavirales</taxon>
        <taxon>Baculoviridae</taxon>
        <taxon>Alphabaculovirus</taxon>
        <taxon>Alphabaculovirus alterchofumiferanae</taxon>
    </lineage>
</organism>
<accession>Q90158</accession>
<keyword id="KW-0328">Glycosyltransferase</keyword>
<keyword id="KW-1185">Reference proteome</keyword>
<keyword id="KW-0732">Signal</keyword>
<keyword id="KW-0808">Transferase</keyword>
<sequence>MIFILLTTLLAVGGAQTANILAVLPTPAYSHHLVYQAYVQALADKCHNVTVVKPQLLDYAAANKQRCGRIEQIDADMSSQQYKKLVASSGAFRKRGVVSDETTVTAENYMGLVEMFRDQFDNAHVRSFLATNRTFDVVVVEAFADYALVFGHLFRPAPVIQIAPGYGLAENFDAVGAVGRHPVHYPNIWRSSSIGNADGALIEWRLYNEFELLARRSDALLKLQFGPNTPTIRQLRNNVQLLLLNLHPVYDNNRPVPPSVQYLGGGLHLTLEPPQRLDIELEKRLNASVNGTVYVSFGSSIDTNSIHAEFLQMLLDTFAKLDNRTVLWKVDDAVAKSVVLPRNVIAQKWFNQRAVLNHRNVVAFVTQGGLQSSDEALHARVPMVCLPMMGDQFHHSAKLEQFGVARALNTVTVSAAQLALAVGDVIADRLAYQLRMTNLLNVVAFDEATPADKAIKFTERVIRFGHDITRSECSLKSPSANTDYSDYFVRFPL</sequence>
<proteinExistence type="evidence at transcript level"/>
<protein>
    <recommendedName>
        <fullName>Ecdysteroid UDP-glucosyltransferase</fullName>
        <ecNumber>2.4.1.-</ecNumber>
    </recommendedName>
</protein>
<name>UDPE_NPVCD</name>
<organismHost>
    <name type="scientific">Lepidoptera</name>
    <name type="common">butterflies and moths</name>
    <dbReference type="NCBI Taxonomy" id="7088"/>
</organismHost>
<comment type="function">
    <text evidence="1">Catalyzes the transfer of glucose from UDP-glucose to ecdysteroids which are insect molting hormones. Expression of egt interferes with normal insect development and block molting (By similarity).</text>
</comment>
<comment type="developmental stage">
    <text>Peaks around 12 hours p.i.</text>
</comment>
<comment type="similarity">
    <text evidence="3">Belongs to the UDP-glycosyltransferase family.</text>
</comment>
<evidence type="ECO:0000250" key="1"/>
<evidence type="ECO:0000255" key="2"/>
<evidence type="ECO:0000305" key="3"/>
<reference key="1">
    <citation type="journal article" date="1995" name="J. Gen. Virol.">
        <title>Characterization, sequencing and phylogeny of the ecdysteroid UDP-glucosyltransferase gene from two distinct nuclear polyhedrosis viruses isolated from Choristoneura fumiferana.</title>
        <authorList>
            <person name="Barrett J.W."/>
            <person name="Krell P.J."/>
            <person name="Arif B.M."/>
        </authorList>
    </citation>
    <scope>NUCLEOTIDE SEQUENCE [GENOMIC DNA]</scope>
</reference>
<reference key="2">
    <citation type="journal article" date="2005" name="J. Gen. Virol.">
        <title>Gene organization and sequencing of the Choristoneura fumiferana defective nucleopolyhedrovirus genome.</title>
        <authorList>
            <person name="Lauzon H.A."/>
            <person name="Jamieson P.B."/>
            <person name="Krell P.J."/>
            <person name="Arif B.M."/>
        </authorList>
    </citation>
    <scope>NUCLEOTIDE SEQUENCE [GENOMIC DNA]</scope>
    <scope>SEQUENCE REVISION TO 312</scope>
</reference>
<gene>
    <name type="primary">egt</name>
    <name type="synonym">UGT21A3</name>
    <name type="ORF">Op14/Ac15</name>
</gene>
<dbReference type="EC" id="2.4.1.-"/>
<dbReference type="EMBL" id="AY327402">
    <property type="protein sequence ID" value="AAC09376.2"/>
    <property type="molecule type" value="Genomic_DNA"/>
</dbReference>
<dbReference type="RefSeq" id="NP_932625.1">
    <property type="nucleotide sequence ID" value="NC_005137.2"/>
</dbReference>
<dbReference type="SMR" id="Q90158"/>
<dbReference type="CAZy" id="GT1">
    <property type="family name" value="Glycosyltransferase Family 1"/>
</dbReference>
<dbReference type="KEGG" id="vg:2943836"/>
<dbReference type="OrthoDB" id="5462at10239"/>
<dbReference type="Proteomes" id="UP000202937">
    <property type="component" value="Genome"/>
</dbReference>
<dbReference type="GO" id="GO:0008194">
    <property type="term" value="F:UDP-glycosyltransferase activity"/>
    <property type="evidence" value="ECO:0007669"/>
    <property type="project" value="InterPro"/>
</dbReference>
<dbReference type="CDD" id="cd03784">
    <property type="entry name" value="GT1_Gtf-like"/>
    <property type="match status" value="1"/>
</dbReference>
<dbReference type="Gene3D" id="3.40.50.2000">
    <property type="entry name" value="Glycogen Phosphorylase B"/>
    <property type="match status" value="1"/>
</dbReference>
<dbReference type="InterPro" id="IPR016224">
    <property type="entry name" value="Ecdysteroid_UDP-Glc_Trfase"/>
</dbReference>
<dbReference type="InterPro" id="IPR050271">
    <property type="entry name" value="UDP-glycosyltransferase"/>
</dbReference>
<dbReference type="InterPro" id="IPR002213">
    <property type="entry name" value="UDP_glucos_trans"/>
</dbReference>
<dbReference type="InterPro" id="IPR035595">
    <property type="entry name" value="UDP_glycos_trans_CS"/>
</dbReference>
<dbReference type="PANTHER" id="PTHR48043">
    <property type="entry name" value="EG:EG0003.4 PROTEIN-RELATED"/>
    <property type="match status" value="1"/>
</dbReference>
<dbReference type="PANTHER" id="PTHR48043:SF145">
    <property type="entry name" value="FI06409P-RELATED"/>
    <property type="match status" value="1"/>
</dbReference>
<dbReference type="Pfam" id="PF00201">
    <property type="entry name" value="UDPGT"/>
    <property type="match status" value="1"/>
</dbReference>
<dbReference type="PIRSF" id="PIRSF000476">
    <property type="entry name" value="Ecdystd_UDP_glucosyltfrase"/>
    <property type="match status" value="1"/>
</dbReference>
<dbReference type="SUPFAM" id="SSF53756">
    <property type="entry name" value="UDP-Glycosyltransferase/glycogen phosphorylase"/>
    <property type="match status" value="1"/>
</dbReference>
<dbReference type="PROSITE" id="PS00375">
    <property type="entry name" value="UDPGT"/>
    <property type="match status" value="1"/>
</dbReference>
<feature type="signal peptide" evidence="2">
    <location>
        <begin position="1"/>
        <end position="17"/>
    </location>
</feature>
<feature type="chain" id="PRO_0000036059" description="Ecdysteroid UDP-glucosyltransferase">
    <location>
        <begin position="18"/>
        <end position="493"/>
    </location>
</feature>